<organism>
    <name type="scientific">Staphylococcus aureus (strain JH9)</name>
    <dbReference type="NCBI Taxonomy" id="359786"/>
    <lineage>
        <taxon>Bacteria</taxon>
        <taxon>Bacillati</taxon>
        <taxon>Bacillota</taxon>
        <taxon>Bacilli</taxon>
        <taxon>Bacillales</taxon>
        <taxon>Staphylococcaceae</taxon>
        <taxon>Staphylococcus</taxon>
    </lineage>
</organism>
<keyword id="KW-0021">Allosteric enzyme</keyword>
<keyword id="KW-0067">ATP-binding</keyword>
<keyword id="KW-0963">Cytoplasm</keyword>
<keyword id="KW-0324">Glycolysis</keyword>
<keyword id="KW-0418">Kinase</keyword>
<keyword id="KW-0460">Magnesium</keyword>
<keyword id="KW-0479">Metal-binding</keyword>
<keyword id="KW-0547">Nucleotide-binding</keyword>
<keyword id="KW-0808">Transferase</keyword>
<proteinExistence type="inferred from homology"/>
<accession>A5ITM2</accession>
<evidence type="ECO:0000255" key="1">
    <source>
        <dbReference type="HAMAP-Rule" id="MF_00339"/>
    </source>
</evidence>
<name>PFKA_STAA9</name>
<comment type="function">
    <text evidence="1">Catalyzes the phosphorylation of D-fructose 6-phosphate to fructose 1,6-bisphosphate by ATP, the first committing step of glycolysis.</text>
</comment>
<comment type="catalytic activity">
    <reaction evidence="1">
        <text>beta-D-fructose 6-phosphate + ATP = beta-D-fructose 1,6-bisphosphate + ADP + H(+)</text>
        <dbReference type="Rhea" id="RHEA:16109"/>
        <dbReference type="ChEBI" id="CHEBI:15378"/>
        <dbReference type="ChEBI" id="CHEBI:30616"/>
        <dbReference type="ChEBI" id="CHEBI:32966"/>
        <dbReference type="ChEBI" id="CHEBI:57634"/>
        <dbReference type="ChEBI" id="CHEBI:456216"/>
        <dbReference type="EC" id="2.7.1.11"/>
    </reaction>
</comment>
<comment type="cofactor">
    <cofactor evidence="1">
        <name>Mg(2+)</name>
        <dbReference type="ChEBI" id="CHEBI:18420"/>
    </cofactor>
</comment>
<comment type="activity regulation">
    <text evidence="1">Allosterically activated by ADP and other diphosphonucleosides, and allosterically inhibited by phosphoenolpyruvate.</text>
</comment>
<comment type="pathway">
    <text evidence="1">Carbohydrate degradation; glycolysis; D-glyceraldehyde 3-phosphate and glycerone phosphate from D-glucose: step 3/4.</text>
</comment>
<comment type="subunit">
    <text evidence="1">Homotetramer.</text>
</comment>
<comment type="subcellular location">
    <subcellularLocation>
        <location evidence="1">Cytoplasm</location>
    </subcellularLocation>
</comment>
<comment type="similarity">
    <text evidence="1">Belongs to the phosphofructokinase type A (PFKA) family. ATP-dependent PFK group I subfamily. Prokaryotic clade 'B1' sub-subfamily.</text>
</comment>
<feature type="chain" id="PRO_1000079314" description="ATP-dependent 6-phosphofructokinase">
    <location>
        <begin position="1"/>
        <end position="322"/>
    </location>
</feature>
<feature type="active site" description="Proton acceptor" evidence="1">
    <location>
        <position position="129"/>
    </location>
</feature>
<feature type="binding site" evidence="1">
    <location>
        <position position="11"/>
    </location>
    <ligand>
        <name>ATP</name>
        <dbReference type="ChEBI" id="CHEBI:30616"/>
    </ligand>
</feature>
<feature type="binding site" evidence="1">
    <location>
        <begin position="21"/>
        <end position="25"/>
    </location>
    <ligand>
        <name>ADP</name>
        <dbReference type="ChEBI" id="CHEBI:456216"/>
        <note>allosteric activator; ligand shared between dimeric partners</note>
    </ligand>
</feature>
<feature type="binding site" evidence="1">
    <location>
        <begin position="72"/>
        <end position="73"/>
    </location>
    <ligand>
        <name>ATP</name>
        <dbReference type="ChEBI" id="CHEBI:30616"/>
    </ligand>
</feature>
<feature type="binding site" evidence="1">
    <location>
        <begin position="102"/>
        <end position="105"/>
    </location>
    <ligand>
        <name>ATP</name>
        <dbReference type="ChEBI" id="CHEBI:30616"/>
    </ligand>
</feature>
<feature type="binding site" evidence="1">
    <location>
        <position position="103"/>
    </location>
    <ligand>
        <name>Mg(2+)</name>
        <dbReference type="ChEBI" id="CHEBI:18420"/>
        <note>catalytic</note>
    </ligand>
</feature>
<feature type="binding site" description="in other chain" evidence="1">
    <location>
        <begin position="127"/>
        <end position="129"/>
    </location>
    <ligand>
        <name>substrate</name>
        <note>ligand shared between dimeric partners</note>
    </ligand>
</feature>
<feature type="binding site" description="in other chain" evidence="1">
    <location>
        <position position="156"/>
    </location>
    <ligand>
        <name>ADP</name>
        <dbReference type="ChEBI" id="CHEBI:456216"/>
        <note>allosteric activator; ligand shared between dimeric partners</note>
    </ligand>
</feature>
<feature type="binding site" evidence="1">
    <location>
        <position position="164"/>
    </location>
    <ligand>
        <name>substrate</name>
        <note>ligand shared between dimeric partners</note>
    </ligand>
</feature>
<feature type="binding site" description="in other chain" evidence="1">
    <location>
        <begin position="171"/>
        <end position="173"/>
    </location>
    <ligand>
        <name>substrate</name>
        <note>ligand shared between dimeric partners</note>
    </ligand>
</feature>
<feature type="binding site" description="in other chain" evidence="1">
    <location>
        <begin position="187"/>
        <end position="189"/>
    </location>
    <ligand>
        <name>ADP</name>
        <dbReference type="ChEBI" id="CHEBI:456216"/>
        <note>allosteric activator; ligand shared between dimeric partners</note>
    </ligand>
</feature>
<feature type="binding site" description="in other chain" evidence="1">
    <location>
        <position position="213"/>
    </location>
    <ligand>
        <name>ADP</name>
        <dbReference type="ChEBI" id="CHEBI:456216"/>
        <note>allosteric activator; ligand shared between dimeric partners</note>
    </ligand>
</feature>
<feature type="binding site" description="in other chain" evidence="1">
    <location>
        <begin position="215"/>
        <end position="217"/>
    </location>
    <ligand>
        <name>ADP</name>
        <dbReference type="ChEBI" id="CHEBI:456216"/>
        <note>allosteric activator; ligand shared between dimeric partners</note>
    </ligand>
</feature>
<feature type="binding site" description="in other chain" evidence="1">
    <location>
        <position position="224"/>
    </location>
    <ligand>
        <name>substrate</name>
        <note>ligand shared between dimeric partners</note>
    </ligand>
</feature>
<feature type="binding site" evidence="1">
    <location>
        <position position="245"/>
    </location>
    <ligand>
        <name>substrate</name>
        <note>ligand shared between dimeric partners</note>
    </ligand>
</feature>
<feature type="binding site" description="in other chain" evidence="1">
    <location>
        <begin position="251"/>
        <end position="254"/>
    </location>
    <ligand>
        <name>substrate</name>
        <note>ligand shared between dimeric partners</note>
    </ligand>
</feature>
<dbReference type="EC" id="2.7.1.11" evidence="1"/>
<dbReference type="EMBL" id="CP000703">
    <property type="protein sequence ID" value="ABQ49545.1"/>
    <property type="molecule type" value="Genomic_DNA"/>
</dbReference>
<dbReference type="RefSeq" id="WP_000717561.1">
    <property type="nucleotide sequence ID" value="NC_009487.1"/>
</dbReference>
<dbReference type="SMR" id="A5ITM2"/>
<dbReference type="KEGG" id="saj:SaurJH9_1755"/>
<dbReference type="HOGENOM" id="CLU_020655_0_1_9"/>
<dbReference type="UniPathway" id="UPA00109">
    <property type="reaction ID" value="UER00182"/>
</dbReference>
<dbReference type="GO" id="GO:0005945">
    <property type="term" value="C:6-phosphofructokinase complex"/>
    <property type="evidence" value="ECO:0007669"/>
    <property type="project" value="TreeGrafter"/>
</dbReference>
<dbReference type="GO" id="GO:0003872">
    <property type="term" value="F:6-phosphofructokinase activity"/>
    <property type="evidence" value="ECO:0007669"/>
    <property type="project" value="UniProtKB-UniRule"/>
</dbReference>
<dbReference type="GO" id="GO:0016208">
    <property type="term" value="F:AMP binding"/>
    <property type="evidence" value="ECO:0007669"/>
    <property type="project" value="TreeGrafter"/>
</dbReference>
<dbReference type="GO" id="GO:0005524">
    <property type="term" value="F:ATP binding"/>
    <property type="evidence" value="ECO:0007669"/>
    <property type="project" value="UniProtKB-KW"/>
</dbReference>
<dbReference type="GO" id="GO:0070095">
    <property type="term" value="F:fructose-6-phosphate binding"/>
    <property type="evidence" value="ECO:0007669"/>
    <property type="project" value="TreeGrafter"/>
</dbReference>
<dbReference type="GO" id="GO:0042802">
    <property type="term" value="F:identical protein binding"/>
    <property type="evidence" value="ECO:0007669"/>
    <property type="project" value="TreeGrafter"/>
</dbReference>
<dbReference type="GO" id="GO:0046872">
    <property type="term" value="F:metal ion binding"/>
    <property type="evidence" value="ECO:0007669"/>
    <property type="project" value="UniProtKB-KW"/>
</dbReference>
<dbReference type="GO" id="GO:0048029">
    <property type="term" value="F:monosaccharide binding"/>
    <property type="evidence" value="ECO:0007669"/>
    <property type="project" value="TreeGrafter"/>
</dbReference>
<dbReference type="GO" id="GO:0061621">
    <property type="term" value="P:canonical glycolysis"/>
    <property type="evidence" value="ECO:0007669"/>
    <property type="project" value="TreeGrafter"/>
</dbReference>
<dbReference type="GO" id="GO:0030388">
    <property type="term" value="P:fructose 1,6-bisphosphate metabolic process"/>
    <property type="evidence" value="ECO:0007669"/>
    <property type="project" value="TreeGrafter"/>
</dbReference>
<dbReference type="GO" id="GO:0006002">
    <property type="term" value="P:fructose 6-phosphate metabolic process"/>
    <property type="evidence" value="ECO:0007669"/>
    <property type="project" value="InterPro"/>
</dbReference>
<dbReference type="FunFam" id="3.40.50.450:FF:000001">
    <property type="entry name" value="ATP-dependent 6-phosphofructokinase"/>
    <property type="match status" value="1"/>
</dbReference>
<dbReference type="FunFam" id="3.40.50.460:FF:000002">
    <property type="entry name" value="ATP-dependent 6-phosphofructokinase"/>
    <property type="match status" value="1"/>
</dbReference>
<dbReference type="Gene3D" id="3.40.50.450">
    <property type="match status" value="1"/>
</dbReference>
<dbReference type="Gene3D" id="3.40.50.460">
    <property type="entry name" value="Phosphofructokinase domain"/>
    <property type="match status" value="1"/>
</dbReference>
<dbReference type="HAMAP" id="MF_00339">
    <property type="entry name" value="Phosphofructokinase_I_B1"/>
    <property type="match status" value="1"/>
</dbReference>
<dbReference type="InterPro" id="IPR022953">
    <property type="entry name" value="ATP_PFK"/>
</dbReference>
<dbReference type="InterPro" id="IPR012003">
    <property type="entry name" value="ATP_PFK_prok-type"/>
</dbReference>
<dbReference type="InterPro" id="IPR012828">
    <property type="entry name" value="PFKA_ATP_prok"/>
</dbReference>
<dbReference type="InterPro" id="IPR015912">
    <property type="entry name" value="Phosphofructokinase_CS"/>
</dbReference>
<dbReference type="InterPro" id="IPR000023">
    <property type="entry name" value="Phosphofructokinase_dom"/>
</dbReference>
<dbReference type="InterPro" id="IPR035966">
    <property type="entry name" value="PKF_sf"/>
</dbReference>
<dbReference type="NCBIfam" id="TIGR02482">
    <property type="entry name" value="PFKA_ATP"/>
    <property type="match status" value="1"/>
</dbReference>
<dbReference type="NCBIfam" id="NF002872">
    <property type="entry name" value="PRK03202.1"/>
    <property type="match status" value="1"/>
</dbReference>
<dbReference type="PANTHER" id="PTHR13697:SF4">
    <property type="entry name" value="ATP-DEPENDENT 6-PHOSPHOFRUCTOKINASE"/>
    <property type="match status" value="1"/>
</dbReference>
<dbReference type="PANTHER" id="PTHR13697">
    <property type="entry name" value="PHOSPHOFRUCTOKINASE"/>
    <property type="match status" value="1"/>
</dbReference>
<dbReference type="Pfam" id="PF00365">
    <property type="entry name" value="PFK"/>
    <property type="match status" value="1"/>
</dbReference>
<dbReference type="PIRSF" id="PIRSF000532">
    <property type="entry name" value="ATP_PFK_prok"/>
    <property type="match status" value="1"/>
</dbReference>
<dbReference type="PRINTS" id="PR00476">
    <property type="entry name" value="PHFRCTKINASE"/>
</dbReference>
<dbReference type="SUPFAM" id="SSF53784">
    <property type="entry name" value="Phosphofructokinase"/>
    <property type="match status" value="1"/>
</dbReference>
<dbReference type="PROSITE" id="PS00433">
    <property type="entry name" value="PHOSPHOFRUCTOKINASE"/>
    <property type="match status" value="1"/>
</dbReference>
<sequence length="322" mass="34840">MKKIAVLTSGGDSPGMNAAVRAVVRTAIYNEIEVYGVYHGYQGLLNDDIHKLELGSVGDTIQRGGTFLYSARCPEFKEQEVRKVAIENLRKRGIEGLVVIGGDGSYRGAQRISEECKEIQTIGIPGTIDNDINGTDFTIGFDTALNTIIGLVDKIRDTASSHARTFIIEAMGRDCGDLALWAGLSVGAETIVVPEVKTDIKEIADKIEQGIKRGKKHSIVLVAEGCMTAQDCQKELSQYINVDNRVSVLGHVQRGGSPTGADRVLASRLGGYAVDLLMQGETAKGVGIKNNKIVATSFDEIFDGKDHKFDYSLYELANKLSI</sequence>
<reference key="1">
    <citation type="submission" date="2007-05" db="EMBL/GenBank/DDBJ databases">
        <title>Complete sequence of chromosome of Staphylococcus aureus subsp. aureus JH9.</title>
        <authorList>
            <consortium name="US DOE Joint Genome Institute"/>
            <person name="Copeland A."/>
            <person name="Lucas S."/>
            <person name="Lapidus A."/>
            <person name="Barry K."/>
            <person name="Detter J.C."/>
            <person name="Glavina del Rio T."/>
            <person name="Hammon N."/>
            <person name="Israni S."/>
            <person name="Pitluck S."/>
            <person name="Chain P."/>
            <person name="Malfatti S."/>
            <person name="Shin M."/>
            <person name="Vergez L."/>
            <person name="Schmutz J."/>
            <person name="Larimer F."/>
            <person name="Land M."/>
            <person name="Hauser L."/>
            <person name="Kyrpides N."/>
            <person name="Kim E."/>
            <person name="Tomasz A."/>
            <person name="Richardson P."/>
        </authorList>
    </citation>
    <scope>NUCLEOTIDE SEQUENCE [LARGE SCALE GENOMIC DNA]</scope>
    <source>
        <strain>JH9</strain>
    </source>
</reference>
<protein>
    <recommendedName>
        <fullName evidence="1">ATP-dependent 6-phosphofructokinase</fullName>
        <shortName evidence="1">ATP-PFK</shortName>
        <shortName evidence="1">Phosphofructokinase</shortName>
        <ecNumber evidence="1">2.7.1.11</ecNumber>
    </recommendedName>
    <alternativeName>
        <fullName evidence="1">Phosphohexokinase</fullName>
    </alternativeName>
</protein>
<gene>
    <name evidence="1" type="primary">pfkA</name>
    <name type="ordered locus">SaurJH9_1755</name>
</gene>